<proteinExistence type="inferred from homology"/>
<reference key="1">
    <citation type="journal article" date="2011" name="J. Bacteriol.">
        <title>Complete genome sequence of the plant growth-promoting endophyte Burkholderia phytofirmans strain PsJN.</title>
        <authorList>
            <person name="Weilharter A."/>
            <person name="Mitter B."/>
            <person name="Shin M.V."/>
            <person name="Chain P.S."/>
            <person name="Nowak J."/>
            <person name="Sessitsch A."/>
        </authorList>
    </citation>
    <scope>NUCLEOTIDE SEQUENCE [LARGE SCALE GENOMIC DNA]</scope>
    <source>
        <strain>DSM 17436 / LMG 22146 / PsJN</strain>
    </source>
</reference>
<name>ACCA_PARPJ</name>
<dbReference type="EC" id="2.1.3.15" evidence="1"/>
<dbReference type="EMBL" id="CP001052">
    <property type="protein sequence ID" value="ACD16903.1"/>
    <property type="molecule type" value="Genomic_DNA"/>
</dbReference>
<dbReference type="RefSeq" id="WP_007181378.1">
    <property type="nucleotide sequence ID" value="NC_010681.1"/>
</dbReference>
<dbReference type="SMR" id="B2SXP7"/>
<dbReference type="STRING" id="398527.Bphyt_2508"/>
<dbReference type="KEGG" id="bpy:Bphyt_2508"/>
<dbReference type="eggNOG" id="COG0825">
    <property type="taxonomic scope" value="Bacteria"/>
</dbReference>
<dbReference type="HOGENOM" id="CLU_015486_0_2_4"/>
<dbReference type="OrthoDB" id="9808023at2"/>
<dbReference type="UniPathway" id="UPA00655">
    <property type="reaction ID" value="UER00711"/>
</dbReference>
<dbReference type="Proteomes" id="UP000001739">
    <property type="component" value="Chromosome 1"/>
</dbReference>
<dbReference type="GO" id="GO:0009317">
    <property type="term" value="C:acetyl-CoA carboxylase complex"/>
    <property type="evidence" value="ECO:0007669"/>
    <property type="project" value="InterPro"/>
</dbReference>
<dbReference type="GO" id="GO:0003989">
    <property type="term" value="F:acetyl-CoA carboxylase activity"/>
    <property type="evidence" value="ECO:0007669"/>
    <property type="project" value="InterPro"/>
</dbReference>
<dbReference type="GO" id="GO:0005524">
    <property type="term" value="F:ATP binding"/>
    <property type="evidence" value="ECO:0007669"/>
    <property type="project" value="UniProtKB-KW"/>
</dbReference>
<dbReference type="GO" id="GO:0016743">
    <property type="term" value="F:carboxyl- or carbamoyltransferase activity"/>
    <property type="evidence" value="ECO:0007669"/>
    <property type="project" value="UniProtKB-UniRule"/>
</dbReference>
<dbReference type="GO" id="GO:0006633">
    <property type="term" value="P:fatty acid biosynthetic process"/>
    <property type="evidence" value="ECO:0007669"/>
    <property type="project" value="UniProtKB-KW"/>
</dbReference>
<dbReference type="GO" id="GO:2001295">
    <property type="term" value="P:malonyl-CoA biosynthetic process"/>
    <property type="evidence" value="ECO:0007669"/>
    <property type="project" value="UniProtKB-UniRule"/>
</dbReference>
<dbReference type="Gene3D" id="3.90.226.10">
    <property type="entry name" value="2-enoyl-CoA Hydratase, Chain A, domain 1"/>
    <property type="match status" value="1"/>
</dbReference>
<dbReference type="HAMAP" id="MF_00823">
    <property type="entry name" value="AcetylCoA_CT_alpha"/>
    <property type="match status" value="1"/>
</dbReference>
<dbReference type="InterPro" id="IPR001095">
    <property type="entry name" value="Acetyl_CoA_COase_a_su"/>
</dbReference>
<dbReference type="InterPro" id="IPR029045">
    <property type="entry name" value="ClpP/crotonase-like_dom_sf"/>
</dbReference>
<dbReference type="InterPro" id="IPR011763">
    <property type="entry name" value="COA_CT_C"/>
</dbReference>
<dbReference type="NCBIfam" id="TIGR00513">
    <property type="entry name" value="accA"/>
    <property type="match status" value="1"/>
</dbReference>
<dbReference type="NCBIfam" id="NF041504">
    <property type="entry name" value="AccA_sub"/>
    <property type="match status" value="1"/>
</dbReference>
<dbReference type="NCBIfam" id="NF004344">
    <property type="entry name" value="PRK05724.1"/>
    <property type="match status" value="1"/>
</dbReference>
<dbReference type="PANTHER" id="PTHR42853">
    <property type="entry name" value="ACETYL-COENZYME A CARBOXYLASE CARBOXYL TRANSFERASE SUBUNIT ALPHA"/>
    <property type="match status" value="1"/>
</dbReference>
<dbReference type="PANTHER" id="PTHR42853:SF3">
    <property type="entry name" value="ACETYL-COENZYME A CARBOXYLASE CARBOXYL TRANSFERASE SUBUNIT ALPHA, CHLOROPLASTIC"/>
    <property type="match status" value="1"/>
</dbReference>
<dbReference type="Pfam" id="PF03255">
    <property type="entry name" value="ACCA"/>
    <property type="match status" value="1"/>
</dbReference>
<dbReference type="PRINTS" id="PR01069">
    <property type="entry name" value="ACCCTRFRASEA"/>
</dbReference>
<dbReference type="SUPFAM" id="SSF52096">
    <property type="entry name" value="ClpP/crotonase"/>
    <property type="match status" value="1"/>
</dbReference>
<dbReference type="PROSITE" id="PS50989">
    <property type="entry name" value="COA_CT_CTER"/>
    <property type="match status" value="1"/>
</dbReference>
<keyword id="KW-0067">ATP-binding</keyword>
<keyword id="KW-0963">Cytoplasm</keyword>
<keyword id="KW-0275">Fatty acid biosynthesis</keyword>
<keyword id="KW-0276">Fatty acid metabolism</keyword>
<keyword id="KW-0444">Lipid biosynthesis</keyword>
<keyword id="KW-0443">Lipid metabolism</keyword>
<keyword id="KW-0547">Nucleotide-binding</keyword>
<keyword id="KW-0808">Transferase</keyword>
<accession>B2SXP7</accession>
<sequence>MKTTFLDFEQPIAELEAKIEELRFVQDDSAVDISEEIERLSKKSQQLTKDLYANLTPWQVSQIARHPQRPYTFDYVNELFTDFHELHGDRNYADDLSIVGGLARFNGQACMVIGHQKGRDTKERALRNFGMPRPEGYRKAERLMRLAEKFGLPIFTFIDTPGAYPGIGAEERGQSEAIGRNLYVMAELKTPLIATIIGEGGSGGALAIAVGDSVLMLQFSTYSVISPEGCASILWKSAAKAPEAAEALGLTAHRLKALGLIDKIVNEPLGGAHRDPKGMAAMLRRALADSLRQFQGMSINDLRQRRFERLMSYGKFKETTPGA</sequence>
<comment type="function">
    <text evidence="1">Component of the acetyl coenzyme A carboxylase (ACC) complex. First, biotin carboxylase catalyzes the carboxylation of biotin on its carrier protein (BCCP) and then the CO(2) group is transferred by the carboxyltransferase to acetyl-CoA to form malonyl-CoA.</text>
</comment>
<comment type="catalytic activity">
    <reaction evidence="1">
        <text>N(6)-carboxybiotinyl-L-lysyl-[protein] + acetyl-CoA = N(6)-biotinyl-L-lysyl-[protein] + malonyl-CoA</text>
        <dbReference type="Rhea" id="RHEA:54728"/>
        <dbReference type="Rhea" id="RHEA-COMP:10505"/>
        <dbReference type="Rhea" id="RHEA-COMP:10506"/>
        <dbReference type="ChEBI" id="CHEBI:57288"/>
        <dbReference type="ChEBI" id="CHEBI:57384"/>
        <dbReference type="ChEBI" id="CHEBI:83144"/>
        <dbReference type="ChEBI" id="CHEBI:83145"/>
        <dbReference type="EC" id="2.1.3.15"/>
    </reaction>
</comment>
<comment type="pathway">
    <text evidence="1">Lipid metabolism; malonyl-CoA biosynthesis; malonyl-CoA from acetyl-CoA: step 1/1.</text>
</comment>
<comment type="subunit">
    <text evidence="1">Acetyl-CoA carboxylase is a heterohexamer composed of biotin carboxyl carrier protein (AccB), biotin carboxylase (AccC) and two subunits each of ACCase subunit alpha (AccA) and ACCase subunit beta (AccD).</text>
</comment>
<comment type="subcellular location">
    <subcellularLocation>
        <location evidence="1">Cytoplasm</location>
    </subcellularLocation>
</comment>
<comment type="similarity">
    <text evidence="1">Belongs to the AccA family.</text>
</comment>
<organism>
    <name type="scientific">Paraburkholderia phytofirmans (strain DSM 17436 / LMG 22146 / PsJN)</name>
    <name type="common">Burkholderia phytofirmans</name>
    <dbReference type="NCBI Taxonomy" id="398527"/>
    <lineage>
        <taxon>Bacteria</taxon>
        <taxon>Pseudomonadati</taxon>
        <taxon>Pseudomonadota</taxon>
        <taxon>Betaproteobacteria</taxon>
        <taxon>Burkholderiales</taxon>
        <taxon>Burkholderiaceae</taxon>
        <taxon>Paraburkholderia</taxon>
    </lineage>
</organism>
<gene>
    <name evidence="1" type="primary">accA</name>
    <name type="ordered locus">Bphyt_2508</name>
</gene>
<protein>
    <recommendedName>
        <fullName evidence="1">Acetyl-coenzyme A carboxylase carboxyl transferase subunit alpha</fullName>
        <shortName evidence="1">ACCase subunit alpha</shortName>
        <shortName evidence="1">Acetyl-CoA carboxylase carboxyltransferase subunit alpha</shortName>
        <ecNumber evidence="1">2.1.3.15</ecNumber>
    </recommendedName>
</protein>
<evidence type="ECO:0000255" key="1">
    <source>
        <dbReference type="HAMAP-Rule" id="MF_00823"/>
    </source>
</evidence>
<evidence type="ECO:0000255" key="2">
    <source>
        <dbReference type="PROSITE-ProRule" id="PRU01137"/>
    </source>
</evidence>
<feature type="chain" id="PRO_1000134467" description="Acetyl-coenzyme A carboxylase carboxyl transferase subunit alpha">
    <location>
        <begin position="1"/>
        <end position="323"/>
    </location>
</feature>
<feature type="domain" description="CoA carboxyltransferase C-terminal" evidence="2">
    <location>
        <begin position="39"/>
        <end position="293"/>
    </location>
</feature>